<evidence type="ECO:0000250" key="1"/>
<evidence type="ECO:0000255" key="2"/>
<evidence type="ECO:0000256" key="3">
    <source>
        <dbReference type="SAM" id="MobiDB-lite"/>
    </source>
</evidence>
<evidence type="ECO:0000305" key="4"/>
<proteinExistence type="inferred from homology"/>
<comment type="function">
    <text evidence="1">Efflux system for nickel and cobalt.</text>
</comment>
<comment type="subcellular location">
    <subcellularLocation>
        <location evidence="1">Cell inner membrane</location>
        <topology evidence="1">Multi-pass membrane protein</topology>
    </subcellularLocation>
</comment>
<comment type="induction">
    <text evidence="1">By nickel and cobalt. Transcriptionally repressed by RcnR (By similarity).</text>
</comment>
<comment type="similarity">
    <text evidence="4">Belongs to the NiCoT transporter (TC 2.A.52) family. RcnA subfamily.</text>
</comment>
<organism>
    <name type="scientific">Salmonella paratyphi A (strain ATCC 9150 / SARB42)</name>
    <dbReference type="NCBI Taxonomy" id="295319"/>
    <lineage>
        <taxon>Bacteria</taxon>
        <taxon>Pseudomonadati</taxon>
        <taxon>Pseudomonadota</taxon>
        <taxon>Gammaproteobacteria</taxon>
        <taxon>Enterobacterales</taxon>
        <taxon>Enterobacteriaceae</taxon>
        <taxon>Salmonella</taxon>
    </lineage>
</organism>
<reference key="1">
    <citation type="journal article" date="2004" name="Nat. Genet.">
        <title>Comparison of genome degradation in Paratyphi A and Typhi, human-restricted serovars of Salmonella enterica that cause typhoid.</title>
        <authorList>
            <person name="McClelland M."/>
            <person name="Sanderson K.E."/>
            <person name="Clifton S.W."/>
            <person name="Latreille P."/>
            <person name="Porwollik S."/>
            <person name="Sabo A."/>
            <person name="Meyer R."/>
            <person name="Bieri T."/>
            <person name="Ozersky P."/>
            <person name="McLellan M."/>
            <person name="Harkins C.R."/>
            <person name="Wang C."/>
            <person name="Nguyen C."/>
            <person name="Berghoff A."/>
            <person name="Elliott G."/>
            <person name="Kohlberg S."/>
            <person name="Strong C."/>
            <person name="Du F."/>
            <person name="Carter J."/>
            <person name="Kremizki C."/>
            <person name="Layman D."/>
            <person name="Leonard S."/>
            <person name="Sun H."/>
            <person name="Fulton L."/>
            <person name="Nash W."/>
            <person name="Miner T."/>
            <person name="Minx P."/>
            <person name="Delehaunty K."/>
            <person name="Fronick C."/>
            <person name="Magrini V."/>
            <person name="Nhan M."/>
            <person name="Warren W."/>
            <person name="Florea L."/>
            <person name="Spieth J."/>
            <person name="Wilson R.K."/>
        </authorList>
    </citation>
    <scope>NUCLEOTIDE SEQUENCE [LARGE SCALE GENOMIC DNA]</scope>
    <source>
        <strain>ATCC 9150 / SARB42</strain>
    </source>
</reference>
<gene>
    <name type="primary">rcnA</name>
    <name type="ordered locus">SPA2891</name>
</gene>
<accession>Q5PEQ4</accession>
<feature type="chain" id="PRO_0000194012" description="Nickel/cobalt efflux system RcnA">
    <location>
        <begin position="1"/>
        <end position="274"/>
    </location>
</feature>
<feature type="topological domain" description="Periplasmic" evidence="2">
    <location>
        <begin position="1"/>
        <end position="12"/>
    </location>
</feature>
<feature type="transmembrane region" description="Helical" evidence="2">
    <location>
        <begin position="13"/>
        <end position="33"/>
    </location>
</feature>
<feature type="topological domain" description="Cytoplasmic" evidence="2">
    <location>
        <begin position="34"/>
        <end position="51"/>
    </location>
</feature>
<feature type="transmembrane region" description="Helical" evidence="2">
    <location>
        <begin position="52"/>
        <end position="72"/>
    </location>
</feature>
<feature type="topological domain" description="Periplasmic" evidence="2">
    <location>
        <begin position="73"/>
        <end position="85"/>
    </location>
</feature>
<feature type="transmembrane region" description="Helical" evidence="2">
    <location>
        <begin position="86"/>
        <end position="106"/>
    </location>
</feature>
<feature type="topological domain" description="Cytoplasmic" evidence="2">
    <location>
        <begin position="107"/>
        <end position="174"/>
    </location>
</feature>
<feature type="transmembrane region" description="Helical" evidence="2">
    <location>
        <begin position="175"/>
        <end position="195"/>
    </location>
</feature>
<feature type="topological domain" description="Periplasmic" evidence="2">
    <location>
        <begin position="196"/>
        <end position="209"/>
    </location>
</feature>
<feature type="transmembrane region" description="Helical" evidence="2">
    <location>
        <begin position="210"/>
        <end position="230"/>
    </location>
</feature>
<feature type="topological domain" description="Cytoplasmic" evidence="2">
    <location>
        <begin position="231"/>
        <end position="251"/>
    </location>
</feature>
<feature type="transmembrane region" description="Helical" evidence="2">
    <location>
        <begin position="252"/>
        <end position="272"/>
    </location>
</feature>
<feature type="topological domain" description="Periplasmic" evidence="2">
    <location>
        <begin position="273"/>
        <end position="274"/>
    </location>
</feature>
<feature type="region of interest" description="Disordered" evidence="3">
    <location>
        <begin position="122"/>
        <end position="143"/>
    </location>
</feature>
<feature type="compositionally biased region" description="Basic and acidic residues" evidence="3">
    <location>
        <begin position="122"/>
        <end position="141"/>
    </location>
</feature>
<name>RCNA_SALPA</name>
<sequence>MGEFPTLLQQGNGWFFIPSAILLGILHGLEPGHSKTMMAAFIIAIKGTVKQAVMLGLAATLSHTAIVWLIALGGMYLSRAFTAQSVEPWLQLISAIIILSTACWMFWRTWRGEQQWLAGNHHHDHDHDHDHDHDHHGHIHPEGATSKAYQDAHERAHAADIQRRFDGQTVTNGQILLFGLTGGLIPCPAAITVLLICIQLKAFTLGATMVLSFSLSLALTLVTVGVGAAISVQQAAKRWSGFSTLARRAPYFSSILIGLVGVYMGIHGYTGIMQ</sequence>
<keyword id="KW-0997">Cell inner membrane</keyword>
<keyword id="KW-1003">Cell membrane</keyword>
<keyword id="KW-0170">Cobalt</keyword>
<keyword id="KW-0171">Cobalt transport</keyword>
<keyword id="KW-0406">Ion transport</keyword>
<keyword id="KW-0472">Membrane</keyword>
<keyword id="KW-0533">Nickel</keyword>
<keyword id="KW-0921">Nickel transport</keyword>
<keyword id="KW-0812">Transmembrane</keyword>
<keyword id="KW-1133">Transmembrane helix</keyword>
<keyword id="KW-0813">Transport</keyword>
<protein>
    <recommendedName>
        <fullName>Nickel/cobalt efflux system RcnA</fullName>
    </recommendedName>
</protein>
<dbReference type="EMBL" id="CP000026">
    <property type="protein sequence ID" value="AAV78734.1"/>
    <property type="molecule type" value="Genomic_DNA"/>
</dbReference>
<dbReference type="RefSeq" id="WP_000503619.1">
    <property type="nucleotide sequence ID" value="NC_006511.1"/>
</dbReference>
<dbReference type="KEGG" id="spt:SPA2891"/>
<dbReference type="HOGENOM" id="CLU_058605_2_0_6"/>
<dbReference type="Proteomes" id="UP000008185">
    <property type="component" value="Chromosome"/>
</dbReference>
<dbReference type="GO" id="GO:0005886">
    <property type="term" value="C:plasma membrane"/>
    <property type="evidence" value="ECO:0007669"/>
    <property type="project" value="UniProtKB-SubCell"/>
</dbReference>
<dbReference type="GO" id="GO:0046583">
    <property type="term" value="F:monoatomic cation efflux transmembrane transporter activity"/>
    <property type="evidence" value="ECO:0007669"/>
    <property type="project" value="TreeGrafter"/>
</dbReference>
<dbReference type="GO" id="GO:0015099">
    <property type="term" value="F:nickel cation transmembrane transporter activity"/>
    <property type="evidence" value="ECO:0007669"/>
    <property type="project" value="InterPro"/>
</dbReference>
<dbReference type="GO" id="GO:0006824">
    <property type="term" value="P:cobalt ion transport"/>
    <property type="evidence" value="ECO:0007669"/>
    <property type="project" value="UniProtKB-KW"/>
</dbReference>
<dbReference type="GO" id="GO:0032025">
    <property type="term" value="P:response to cobalt ion"/>
    <property type="evidence" value="ECO:0007669"/>
    <property type="project" value="TreeGrafter"/>
</dbReference>
<dbReference type="GO" id="GO:0010045">
    <property type="term" value="P:response to nickel cation"/>
    <property type="evidence" value="ECO:0007669"/>
    <property type="project" value="TreeGrafter"/>
</dbReference>
<dbReference type="InterPro" id="IPR011541">
    <property type="entry name" value="Ni/Co_transpt_high_affinity"/>
</dbReference>
<dbReference type="InterPro" id="IPR051224">
    <property type="entry name" value="NiCoT_RcnA"/>
</dbReference>
<dbReference type="NCBIfam" id="NF007454">
    <property type="entry name" value="PRK10019.1"/>
    <property type="match status" value="1"/>
</dbReference>
<dbReference type="PANTHER" id="PTHR40659">
    <property type="entry name" value="NICKEL/COBALT EFFLUX SYSTEM RCNA"/>
    <property type="match status" value="1"/>
</dbReference>
<dbReference type="PANTHER" id="PTHR40659:SF1">
    <property type="entry name" value="NICKEL_COBALT EFFLUX SYSTEM RCNA"/>
    <property type="match status" value="1"/>
</dbReference>
<dbReference type="Pfam" id="PF03824">
    <property type="entry name" value="NicO"/>
    <property type="match status" value="1"/>
</dbReference>